<accession>Q9FGE9</accession>
<accession>F4KDP9</accession>
<accession>F4KDQ1</accession>
<accession>Q944J6</accession>
<protein>
    <recommendedName>
        <fullName>Protein trichome birefringence-like 12</fullName>
    </recommendedName>
</protein>
<keyword id="KW-0025">Alternative splicing</keyword>
<keyword id="KW-0472">Membrane</keyword>
<keyword id="KW-1185">Reference proteome</keyword>
<keyword id="KW-0735">Signal-anchor</keyword>
<keyword id="KW-0812">Transmembrane</keyword>
<keyword id="KW-1133">Transmembrane helix</keyword>
<evidence type="ECO:0000250" key="1">
    <source>
        <dbReference type="UniProtKB" id="Q9FG35"/>
    </source>
</evidence>
<evidence type="ECO:0000250" key="2">
    <source>
        <dbReference type="UniProtKB" id="Q9LY46"/>
    </source>
</evidence>
<evidence type="ECO:0000255" key="3"/>
<evidence type="ECO:0000303" key="4">
    <source>
    </source>
</evidence>
<evidence type="ECO:0000305" key="5"/>
<evidence type="ECO:0000305" key="6">
    <source>
    </source>
</evidence>
<dbReference type="EMBL" id="AB025640">
    <property type="protein sequence ID" value="BAB11608.1"/>
    <property type="molecule type" value="Genomic_DNA"/>
</dbReference>
<dbReference type="EMBL" id="CP002688">
    <property type="protein sequence ID" value="AED97903.1"/>
    <property type="molecule type" value="Genomic_DNA"/>
</dbReference>
<dbReference type="EMBL" id="CP002688">
    <property type="protein sequence ID" value="AED97904.1"/>
    <property type="molecule type" value="Genomic_DNA"/>
</dbReference>
<dbReference type="EMBL" id="CP002688">
    <property type="protein sequence ID" value="AED97905.1"/>
    <property type="molecule type" value="Genomic_DNA"/>
</dbReference>
<dbReference type="EMBL" id="AF360229">
    <property type="protein sequence ID" value="AAK25939.1"/>
    <property type="molecule type" value="mRNA"/>
</dbReference>
<dbReference type="EMBL" id="AY040030">
    <property type="protein sequence ID" value="AAK64088.1"/>
    <property type="molecule type" value="mRNA"/>
</dbReference>
<dbReference type="EMBL" id="AF428365">
    <property type="protein sequence ID" value="AAL16295.1"/>
    <property type="molecule type" value="mRNA"/>
</dbReference>
<dbReference type="RefSeq" id="NP_001190614.1">
    <molecule id="Q9FGE9-2"/>
    <property type="nucleotide sequence ID" value="NM_001203685.1"/>
</dbReference>
<dbReference type="RefSeq" id="NP_201252.1">
    <molecule id="Q9FGE9-1"/>
    <property type="nucleotide sequence ID" value="NM_125843.3"/>
</dbReference>
<dbReference type="RefSeq" id="NP_851267.1">
    <molecule id="Q9FGE9-3"/>
    <property type="nucleotide sequence ID" value="NM_180936.2"/>
</dbReference>
<dbReference type="SMR" id="Q9FGE9"/>
<dbReference type="FunCoup" id="Q9FGE9">
    <property type="interactions" value="1201"/>
</dbReference>
<dbReference type="STRING" id="3702.Q9FGE9"/>
<dbReference type="iPTMnet" id="Q9FGE9"/>
<dbReference type="PaxDb" id="3702-AT5G64470.2"/>
<dbReference type="ProteomicsDB" id="234263">
    <molecule id="Q9FGE9-1"/>
</dbReference>
<dbReference type="EnsemblPlants" id="AT5G64470.1">
    <molecule id="Q9FGE9-3"/>
    <property type="protein sequence ID" value="AT5G64470.1"/>
    <property type="gene ID" value="AT5G64470"/>
</dbReference>
<dbReference type="EnsemblPlants" id="AT5G64470.2">
    <molecule id="Q9FGE9-1"/>
    <property type="protein sequence ID" value="AT5G64470.2"/>
    <property type="gene ID" value="AT5G64470"/>
</dbReference>
<dbReference type="EnsemblPlants" id="AT5G64470.3">
    <molecule id="Q9FGE9-2"/>
    <property type="protein sequence ID" value="AT5G64470.3"/>
    <property type="gene ID" value="AT5G64470"/>
</dbReference>
<dbReference type="GeneID" id="836568"/>
<dbReference type="Gramene" id="AT5G64470.1">
    <molecule id="Q9FGE9-3"/>
    <property type="protein sequence ID" value="AT5G64470.1"/>
    <property type="gene ID" value="AT5G64470"/>
</dbReference>
<dbReference type="Gramene" id="AT5G64470.2">
    <molecule id="Q9FGE9-1"/>
    <property type="protein sequence ID" value="AT5G64470.2"/>
    <property type="gene ID" value="AT5G64470"/>
</dbReference>
<dbReference type="Gramene" id="AT5G64470.3">
    <molecule id="Q9FGE9-2"/>
    <property type="protein sequence ID" value="AT5G64470.3"/>
    <property type="gene ID" value="AT5G64470"/>
</dbReference>
<dbReference type="KEGG" id="ath:AT5G64470"/>
<dbReference type="Araport" id="AT5G64470"/>
<dbReference type="TAIR" id="AT5G64470">
    <property type="gene designation" value="TBL12"/>
</dbReference>
<dbReference type="eggNOG" id="ENOG502QUKA">
    <property type="taxonomic scope" value="Eukaryota"/>
</dbReference>
<dbReference type="HOGENOM" id="CLU_020953_1_0_1"/>
<dbReference type="InParanoid" id="Q9FGE9"/>
<dbReference type="OMA" id="HRNSWNC"/>
<dbReference type="OrthoDB" id="1713585at2759"/>
<dbReference type="PhylomeDB" id="Q9FGE9"/>
<dbReference type="PRO" id="PR:Q9FGE9"/>
<dbReference type="Proteomes" id="UP000006548">
    <property type="component" value="Chromosome 5"/>
</dbReference>
<dbReference type="ExpressionAtlas" id="Q9FGE9">
    <property type="expression patterns" value="baseline and differential"/>
</dbReference>
<dbReference type="GO" id="GO:0016020">
    <property type="term" value="C:membrane"/>
    <property type="evidence" value="ECO:0007669"/>
    <property type="project" value="UniProtKB-SubCell"/>
</dbReference>
<dbReference type="GO" id="GO:0016413">
    <property type="term" value="F:O-acetyltransferase activity"/>
    <property type="evidence" value="ECO:0007669"/>
    <property type="project" value="InterPro"/>
</dbReference>
<dbReference type="InterPro" id="IPR029962">
    <property type="entry name" value="TBL"/>
</dbReference>
<dbReference type="InterPro" id="IPR026057">
    <property type="entry name" value="TBL_C"/>
</dbReference>
<dbReference type="InterPro" id="IPR025846">
    <property type="entry name" value="TBL_N"/>
</dbReference>
<dbReference type="PANTHER" id="PTHR32285:SF23">
    <property type="entry name" value="PROTEIN TRICHOME BIREFRINGENCE-LIKE 12"/>
    <property type="match status" value="1"/>
</dbReference>
<dbReference type="PANTHER" id="PTHR32285">
    <property type="entry name" value="PROTEIN TRICHOME BIREFRINGENCE-LIKE 9-RELATED"/>
    <property type="match status" value="1"/>
</dbReference>
<dbReference type="Pfam" id="PF13839">
    <property type="entry name" value="PC-Esterase"/>
    <property type="match status" value="1"/>
</dbReference>
<dbReference type="Pfam" id="PF14416">
    <property type="entry name" value="PMR5N"/>
    <property type="match status" value="1"/>
</dbReference>
<comment type="function">
    <text evidence="1 2">May act as a bridging protein that binds pectin and other cell wall polysaccharides. Probably involved in maintaining esterification of pectins (By similarity). May be involved in the specific O-acetylation of cell wall polymers (By similarity).</text>
</comment>
<comment type="subcellular location">
    <subcellularLocation>
        <location evidence="5">Membrane</location>
        <topology evidence="5">Single-pass type II membrane protein</topology>
    </subcellularLocation>
</comment>
<comment type="alternative products">
    <event type="alternative splicing"/>
    <isoform>
        <id>Q9FGE9-1</id>
        <name>1</name>
        <sequence type="displayed"/>
    </isoform>
    <isoform>
        <id>Q9FGE9-2</id>
        <name>2</name>
        <sequence type="described" ref="VSP_053690"/>
    </isoform>
    <isoform>
        <id>Q9FGE9-3</id>
        <name>3</name>
        <sequence type="described" ref="VSP_053689 VSP_053691"/>
    </isoform>
</comment>
<comment type="miscellaneous">
    <text evidence="6">Contains 2 motifs that are conserved in esterases, but it is unlikely that this protein belongs to the catalytically active pectin esterases.</text>
</comment>
<comment type="similarity">
    <text evidence="5">Belongs to the PC-esterase family. TBL subfamily.</text>
</comment>
<sequence>MELGSRRIYTTMPSKLRSSSSLLPRILLLSLLLLLFYSLILRRPITSNIASPPPCDLFSGRWVFNPETPKPLYDETCPFHRNAWNCLRNKRDNMDVINSWRWEPNGCGLSRIDPTRFLGMMRNKNVGFVGDSLNENFLVSFLCILRVADPSAIKWKKKKAWRGAYFPKFNVTVAYHRAVLLAKYQWQARSSAEANQDGVKGTYRVDVDVPANEWINVTSFYDVLIFNSGHWWGYDKFPKETPLVFYRKGKPINPPLDILPGFELVLQNMVSYIQREVPAKTLKFWRLQSPRHFYGGDWNQNGSCLLDKPLEENQLDLWFDPRNNGVNKEARKINQIIKNELQTTKIKLLDLTHLSEFRADAHPAIWLGKQDAVAIWGQDCMHWCLPGVPDTWVDILAELILTNLKTE</sequence>
<reference key="1">
    <citation type="submission" date="1999-04" db="EMBL/GenBank/DDBJ databases">
        <title>Structural analysis of Arabidopsis thaliana chromosome 5. XI.</title>
        <authorList>
            <person name="Kaneko T."/>
            <person name="Katoh T."/>
            <person name="Asamizu E."/>
            <person name="Sato S."/>
            <person name="Nakamura Y."/>
            <person name="Kotani H."/>
            <person name="Tabata S."/>
        </authorList>
    </citation>
    <scope>NUCLEOTIDE SEQUENCE [LARGE SCALE GENOMIC DNA]</scope>
    <source>
        <strain>cv. Columbia</strain>
    </source>
</reference>
<reference key="2">
    <citation type="journal article" date="2017" name="Plant J.">
        <title>Araport11: a complete reannotation of the Arabidopsis thaliana reference genome.</title>
        <authorList>
            <person name="Cheng C.Y."/>
            <person name="Krishnakumar V."/>
            <person name="Chan A.P."/>
            <person name="Thibaud-Nissen F."/>
            <person name="Schobel S."/>
            <person name="Town C.D."/>
        </authorList>
    </citation>
    <scope>GENOME REANNOTATION</scope>
    <source>
        <strain>cv. Columbia</strain>
    </source>
</reference>
<reference key="3">
    <citation type="journal article" date="2003" name="Science">
        <title>Empirical analysis of transcriptional activity in the Arabidopsis genome.</title>
        <authorList>
            <person name="Yamada K."/>
            <person name="Lim J."/>
            <person name="Dale J.M."/>
            <person name="Chen H."/>
            <person name="Shinn P."/>
            <person name="Palm C.J."/>
            <person name="Southwick A.M."/>
            <person name="Wu H.C."/>
            <person name="Kim C.J."/>
            <person name="Nguyen M."/>
            <person name="Pham P.K."/>
            <person name="Cheuk R.F."/>
            <person name="Karlin-Newmann G."/>
            <person name="Liu S.X."/>
            <person name="Lam B."/>
            <person name="Sakano H."/>
            <person name="Wu T."/>
            <person name="Yu G."/>
            <person name="Miranda M."/>
            <person name="Quach H.L."/>
            <person name="Tripp M."/>
            <person name="Chang C.H."/>
            <person name="Lee J.M."/>
            <person name="Toriumi M.J."/>
            <person name="Chan M.M."/>
            <person name="Tang C.C."/>
            <person name="Onodera C.S."/>
            <person name="Deng J.M."/>
            <person name="Akiyama K."/>
            <person name="Ansari Y."/>
            <person name="Arakawa T."/>
            <person name="Banh J."/>
            <person name="Banno F."/>
            <person name="Bowser L."/>
            <person name="Brooks S.Y."/>
            <person name="Carninci P."/>
            <person name="Chao Q."/>
            <person name="Choy N."/>
            <person name="Enju A."/>
            <person name="Goldsmith A.D."/>
            <person name="Gurjal M."/>
            <person name="Hansen N.F."/>
            <person name="Hayashizaki Y."/>
            <person name="Johnson-Hopson C."/>
            <person name="Hsuan V.W."/>
            <person name="Iida K."/>
            <person name="Karnes M."/>
            <person name="Khan S."/>
            <person name="Koesema E."/>
            <person name="Ishida J."/>
            <person name="Jiang P.X."/>
            <person name="Jones T."/>
            <person name="Kawai J."/>
            <person name="Kamiya A."/>
            <person name="Meyers C."/>
            <person name="Nakajima M."/>
            <person name="Narusaka M."/>
            <person name="Seki M."/>
            <person name="Sakurai T."/>
            <person name="Satou M."/>
            <person name="Tamse R."/>
            <person name="Vaysberg M."/>
            <person name="Wallender E.K."/>
            <person name="Wong C."/>
            <person name="Yamamura Y."/>
            <person name="Yuan S."/>
            <person name="Shinozaki K."/>
            <person name="Davis R.W."/>
            <person name="Theologis A."/>
            <person name="Ecker J.R."/>
        </authorList>
    </citation>
    <scope>NUCLEOTIDE SEQUENCE [LARGE SCALE MRNA] (ISOFORMS 1 AND 3)</scope>
    <source>
        <strain>cv. Columbia</strain>
    </source>
</reference>
<reference key="4">
    <citation type="journal article" date="2007" name="Plant J.">
        <title>Arabidopsis ESK1 encodes a novel regulator of freezing tolerance.</title>
        <authorList>
            <person name="Xin Z."/>
            <person name="Mandaokar A."/>
            <person name="Chen J."/>
            <person name="Last R.L."/>
            <person name="Browse J."/>
        </authorList>
    </citation>
    <scope>GENE FAMILY</scope>
    <source>
        <strain>cv. Columbia</strain>
    </source>
</reference>
<reference key="5">
    <citation type="journal article" date="2010" name="Plant Physiol.">
        <title>TRICHOME BIREFRINGENCE and its homolog AT5G01360 encode plant-specific DUF231 proteins required for cellulose biosynthesis in Arabidopsis.</title>
        <authorList>
            <person name="Bischoff V."/>
            <person name="Nita S."/>
            <person name="Neumetzler L."/>
            <person name="Schindelasch D."/>
            <person name="Urbain A."/>
            <person name="Eshed R."/>
            <person name="Persson S."/>
            <person name="Delmer D."/>
            <person name="Scheible W.R."/>
        </authorList>
    </citation>
    <scope>GENE FAMILY</scope>
    <scope>NOMENCLATURE</scope>
</reference>
<reference key="6">
    <citation type="journal article" date="2010" name="Plant Signal. Behav.">
        <title>Involvement of TBL/DUF231 proteins into cell wall biology.</title>
        <authorList>
            <person name="Bischoff V."/>
            <person name="Selbig J."/>
            <person name="Scheible W.R."/>
        </authorList>
    </citation>
    <scope>3D-STRUCTURE MODELING</scope>
</reference>
<name>TBL12_ARATH</name>
<gene>
    <name type="primary">TBL12</name>
    <name type="ordered locus">At5g64470</name>
    <name type="ORF">T12B11.6</name>
</gene>
<organism>
    <name type="scientific">Arabidopsis thaliana</name>
    <name type="common">Mouse-ear cress</name>
    <dbReference type="NCBI Taxonomy" id="3702"/>
    <lineage>
        <taxon>Eukaryota</taxon>
        <taxon>Viridiplantae</taxon>
        <taxon>Streptophyta</taxon>
        <taxon>Embryophyta</taxon>
        <taxon>Tracheophyta</taxon>
        <taxon>Spermatophyta</taxon>
        <taxon>Magnoliopsida</taxon>
        <taxon>eudicotyledons</taxon>
        <taxon>Gunneridae</taxon>
        <taxon>Pentapetalae</taxon>
        <taxon>rosids</taxon>
        <taxon>malvids</taxon>
        <taxon>Brassicales</taxon>
        <taxon>Brassicaceae</taxon>
        <taxon>Camelineae</taxon>
        <taxon>Arabidopsis</taxon>
    </lineage>
</organism>
<proteinExistence type="evidence at transcript level"/>
<feature type="chain" id="PRO_0000425378" description="Protein trichome birefringence-like 12">
    <location>
        <begin position="1"/>
        <end position="407"/>
    </location>
</feature>
<feature type="transmembrane region" description="Helical; Signal-anchor for type II membrane protein" evidence="3">
    <location>
        <begin position="21"/>
        <end position="41"/>
    </location>
</feature>
<feature type="short sequence motif" description="GDS motif">
    <location>
        <begin position="130"/>
        <end position="132"/>
    </location>
</feature>
<feature type="short sequence motif" description="DCXHWCLPGXXDXWN motif">
    <location>
        <begin position="379"/>
        <end position="393"/>
    </location>
</feature>
<feature type="splice variant" id="VSP_053689" description="In isoform 3." evidence="4">
    <original>LDLWFDPRNNG</original>
    <variation>EQWSEQRSKKD</variation>
    <location>
        <begin position="315"/>
        <end position="325"/>
    </location>
</feature>
<feature type="splice variant" id="VSP_053690" description="In isoform 2." evidence="5">
    <original>LDLWFDPR</original>
    <variation>VW</variation>
    <location>
        <begin position="315"/>
        <end position="322"/>
    </location>
</feature>
<feature type="splice variant" id="VSP_053691" description="In isoform 3." evidence="4">
    <location>
        <begin position="326"/>
        <end position="407"/>
    </location>
</feature>
<feature type="sequence conflict" description="In Ref. 3; AAL16295." evidence="5" ref="3">
    <original>G</original>
    <variation>E</variation>
    <location>
        <position position="198"/>
    </location>
</feature>